<gene>
    <name type="primary">mrp</name>
    <name type="ordered locus">c2641</name>
</gene>
<feature type="chain" id="PRO_0000184933" description="Iron-sulfur cluster carrier protein">
    <location>
        <begin position="1"/>
        <end position="369"/>
    </location>
</feature>
<feature type="binding site" evidence="1">
    <location>
        <begin position="115"/>
        <end position="122"/>
    </location>
    <ligand>
        <name>ATP</name>
        <dbReference type="ChEBI" id="CHEBI:30616"/>
    </ligand>
</feature>
<protein>
    <recommendedName>
        <fullName evidence="1">Iron-sulfur cluster carrier protein</fullName>
    </recommendedName>
</protein>
<dbReference type="EMBL" id="AE014075">
    <property type="protein sequence ID" value="AAN81097.1"/>
    <property type="status" value="ALT_INIT"/>
    <property type="molecule type" value="Genomic_DNA"/>
</dbReference>
<dbReference type="SMR" id="P0AF09"/>
<dbReference type="STRING" id="199310.c2641"/>
<dbReference type="KEGG" id="ecc:c2641"/>
<dbReference type="eggNOG" id="COG0489">
    <property type="taxonomic scope" value="Bacteria"/>
</dbReference>
<dbReference type="HOGENOM" id="CLU_024839_0_0_6"/>
<dbReference type="Proteomes" id="UP000001410">
    <property type="component" value="Chromosome"/>
</dbReference>
<dbReference type="GO" id="GO:0005829">
    <property type="term" value="C:cytosol"/>
    <property type="evidence" value="ECO:0007669"/>
    <property type="project" value="TreeGrafter"/>
</dbReference>
<dbReference type="GO" id="GO:0051539">
    <property type="term" value="F:4 iron, 4 sulfur cluster binding"/>
    <property type="evidence" value="ECO:0007669"/>
    <property type="project" value="TreeGrafter"/>
</dbReference>
<dbReference type="GO" id="GO:0005524">
    <property type="term" value="F:ATP binding"/>
    <property type="evidence" value="ECO:0007669"/>
    <property type="project" value="UniProtKB-UniRule"/>
</dbReference>
<dbReference type="GO" id="GO:0016887">
    <property type="term" value="F:ATP hydrolysis activity"/>
    <property type="evidence" value="ECO:0007669"/>
    <property type="project" value="UniProtKB-UniRule"/>
</dbReference>
<dbReference type="GO" id="GO:0140663">
    <property type="term" value="F:ATP-dependent FeS chaperone activity"/>
    <property type="evidence" value="ECO:0007669"/>
    <property type="project" value="InterPro"/>
</dbReference>
<dbReference type="GO" id="GO:0046872">
    <property type="term" value="F:metal ion binding"/>
    <property type="evidence" value="ECO:0007669"/>
    <property type="project" value="UniProtKB-KW"/>
</dbReference>
<dbReference type="GO" id="GO:0016226">
    <property type="term" value="P:iron-sulfur cluster assembly"/>
    <property type="evidence" value="ECO:0007669"/>
    <property type="project" value="InterPro"/>
</dbReference>
<dbReference type="CDD" id="cd02037">
    <property type="entry name" value="Mrp_NBP35"/>
    <property type="match status" value="1"/>
</dbReference>
<dbReference type="FunFam" id="3.40.50.300:FF:000418">
    <property type="entry name" value="Iron-sulfur cluster carrier protein"/>
    <property type="match status" value="1"/>
</dbReference>
<dbReference type="Gene3D" id="3.40.50.300">
    <property type="entry name" value="P-loop containing nucleotide triphosphate hydrolases"/>
    <property type="match status" value="1"/>
</dbReference>
<dbReference type="HAMAP" id="MF_02040">
    <property type="entry name" value="Mrp_NBP35"/>
    <property type="match status" value="1"/>
</dbReference>
<dbReference type="InterPro" id="IPR034904">
    <property type="entry name" value="FSCA_dom_sf"/>
</dbReference>
<dbReference type="InterPro" id="IPR000808">
    <property type="entry name" value="Mrp-like_CS"/>
</dbReference>
<dbReference type="InterPro" id="IPR019591">
    <property type="entry name" value="Mrp/NBP35_ATP-bd"/>
</dbReference>
<dbReference type="InterPro" id="IPR044304">
    <property type="entry name" value="NUBPL-like"/>
</dbReference>
<dbReference type="InterPro" id="IPR027417">
    <property type="entry name" value="P-loop_NTPase"/>
</dbReference>
<dbReference type="InterPro" id="IPR033756">
    <property type="entry name" value="YlxH/NBP35"/>
</dbReference>
<dbReference type="NCBIfam" id="NF008669">
    <property type="entry name" value="PRK11670.1"/>
    <property type="match status" value="1"/>
</dbReference>
<dbReference type="PANTHER" id="PTHR42961">
    <property type="entry name" value="IRON-SULFUR PROTEIN NUBPL"/>
    <property type="match status" value="1"/>
</dbReference>
<dbReference type="PANTHER" id="PTHR42961:SF2">
    <property type="entry name" value="IRON-SULFUR PROTEIN NUBPL"/>
    <property type="match status" value="1"/>
</dbReference>
<dbReference type="Pfam" id="PF10609">
    <property type="entry name" value="ParA"/>
    <property type="match status" value="1"/>
</dbReference>
<dbReference type="SUPFAM" id="SSF117916">
    <property type="entry name" value="Fe-S cluster assembly (FSCA) domain-like"/>
    <property type="match status" value="1"/>
</dbReference>
<dbReference type="SUPFAM" id="SSF52540">
    <property type="entry name" value="P-loop containing nucleoside triphosphate hydrolases"/>
    <property type="match status" value="1"/>
</dbReference>
<dbReference type="PROSITE" id="PS01215">
    <property type="entry name" value="MRP"/>
    <property type="match status" value="1"/>
</dbReference>
<reference key="1">
    <citation type="journal article" date="2002" name="Proc. Natl. Acad. Sci. U.S.A.">
        <title>Extensive mosaic structure revealed by the complete genome sequence of uropathogenic Escherichia coli.</title>
        <authorList>
            <person name="Welch R.A."/>
            <person name="Burland V."/>
            <person name="Plunkett G. III"/>
            <person name="Redford P."/>
            <person name="Roesch P."/>
            <person name="Rasko D."/>
            <person name="Buckles E.L."/>
            <person name="Liou S.-R."/>
            <person name="Boutin A."/>
            <person name="Hackett J."/>
            <person name="Stroud D."/>
            <person name="Mayhew G.F."/>
            <person name="Rose D.J."/>
            <person name="Zhou S."/>
            <person name="Schwartz D.C."/>
            <person name="Perna N.T."/>
            <person name="Mobley H.L.T."/>
            <person name="Donnenberg M.S."/>
            <person name="Blattner F.R."/>
        </authorList>
    </citation>
    <scope>NUCLEOTIDE SEQUENCE [LARGE SCALE GENOMIC DNA]</scope>
    <source>
        <strain>CFT073 / ATCC 700928 / UPEC</strain>
    </source>
</reference>
<organism>
    <name type="scientific">Escherichia coli O6:H1 (strain CFT073 / ATCC 700928 / UPEC)</name>
    <dbReference type="NCBI Taxonomy" id="199310"/>
    <lineage>
        <taxon>Bacteria</taxon>
        <taxon>Pseudomonadati</taxon>
        <taxon>Pseudomonadota</taxon>
        <taxon>Gammaproteobacteria</taxon>
        <taxon>Enterobacterales</taxon>
        <taxon>Enterobacteriaceae</taxon>
        <taxon>Escherichia</taxon>
    </lineage>
</organism>
<sequence length="369" mass="39938">MNEQSQAKSPEALRAMVAGTLANFQHPTLKHNLTTLKALHHVAWMDDTLHVELVMPFVWHSAFEELKEQCSAELLRITGAKAIDWKLSHNIATLKRVKNQPGINGVKNIIAVSSGKGGVGKSSTAVNLALALAAEGAKVGILDADIYGPSIPTMLGAENQRPTSPDGTHMAPIMSHGLATNSIGYLVTDDNAMVWRGPMASKALMQMLQETLWPDLDYLVLDMPPGTGDIQLTLAQNIPVTGAVVVTTPQDIALIDAKKGIVMFEKVEVPVLGIVENMSVHICSNCGHHEPIFGTGGAEKLAEKYHTQLLGQMPLHISLREDLDKGTPTVISRPESEFTAIYRQLADRVAAQLYWQGEVIPGEISFRAV</sequence>
<accession>P0AF09</accession>
<accession>P21590</accession>
<name>APBC_ECOL6</name>
<keyword id="KW-0067">ATP-binding</keyword>
<keyword id="KW-0378">Hydrolase</keyword>
<keyword id="KW-0408">Iron</keyword>
<keyword id="KW-0411">Iron-sulfur</keyword>
<keyword id="KW-0479">Metal-binding</keyword>
<keyword id="KW-0547">Nucleotide-binding</keyword>
<keyword id="KW-1185">Reference proteome</keyword>
<comment type="function">
    <text evidence="1">Binds and transfers iron-sulfur (Fe-S) clusters to target apoproteins. Can hydrolyze ATP.</text>
</comment>
<comment type="subunit">
    <text evidence="1">Homodimer.</text>
</comment>
<comment type="similarity">
    <text evidence="1">Belongs to the Mrp/NBP35 ATP-binding proteins family.</text>
</comment>
<comment type="sequence caution" evidence="2">
    <conflict type="erroneous initiation">
        <sequence resource="EMBL-CDS" id="AAN81097"/>
    </conflict>
</comment>
<evidence type="ECO:0000255" key="1">
    <source>
        <dbReference type="HAMAP-Rule" id="MF_02040"/>
    </source>
</evidence>
<evidence type="ECO:0000305" key="2"/>
<proteinExistence type="inferred from homology"/>